<organism>
    <name type="scientific">Bos taurus</name>
    <name type="common">Bovine</name>
    <dbReference type="NCBI Taxonomy" id="9913"/>
    <lineage>
        <taxon>Eukaryota</taxon>
        <taxon>Metazoa</taxon>
        <taxon>Chordata</taxon>
        <taxon>Craniata</taxon>
        <taxon>Vertebrata</taxon>
        <taxon>Euteleostomi</taxon>
        <taxon>Mammalia</taxon>
        <taxon>Eutheria</taxon>
        <taxon>Laurasiatheria</taxon>
        <taxon>Artiodactyla</taxon>
        <taxon>Ruminantia</taxon>
        <taxon>Pecora</taxon>
        <taxon>Bovidae</taxon>
        <taxon>Bovinae</taxon>
        <taxon>Bos</taxon>
    </lineage>
</organism>
<name>K2C71_BOVIN</name>
<feature type="chain" id="PRO_0000314873" description="Keratin, type II cytoskeletal 71">
    <location>
        <begin position="1"/>
        <end position="525"/>
    </location>
</feature>
<feature type="domain" description="IF rod" evidence="3">
    <location>
        <begin position="132"/>
        <end position="445"/>
    </location>
</feature>
<feature type="region of interest" description="Head">
    <location>
        <begin position="1"/>
        <end position="131"/>
    </location>
</feature>
<feature type="region of interest" description="Coil 1A">
    <location>
        <begin position="132"/>
        <end position="167"/>
    </location>
</feature>
<feature type="region of interest" description="Linker 1">
    <location>
        <begin position="168"/>
        <end position="186"/>
    </location>
</feature>
<feature type="region of interest" description="Coil 1B">
    <location>
        <begin position="187"/>
        <end position="278"/>
    </location>
</feature>
<feature type="region of interest" description="Linker 12">
    <location>
        <begin position="279"/>
        <end position="302"/>
    </location>
</feature>
<feature type="region of interest" description="Coil 2">
    <location>
        <begin position="303"/>
        <end position="441"/>
    </location>
</feature>
<feature type="region of interest" description="Tail">
    <location>
        <begin position="442"/>
        <end position="525"/>
    </location>
</feature>
<feature type="region of interest" description="Disordered" evidence="4">
    <location>
        <begin position="492"/>
        <end position="525"/>
    </location>
</feature>
<feature type="compositionally biased region" description="Basic and acidic residues" evidence="4">
    <location>
        <begin position="495"/>
        <end position="510"/>
    </location>
</feature>
<feature type="site" description="Stutter">
    <location>
        <position position="383"/>
    </location>
</feature>
<protein>
    <recommendedName>
        <fullName>Keratin, type II cytoskeletal 71</fullName>
    </recommendedName>
    <alternativeName>
        <fullName>Cytokeratin-71</fullName>
        <shortName>CK-71</shortName>
    </alternativeName>
    <alternativeName>
        <fullName>Keratin-71</fullName>
        <shortName>K71</shortName>
    </alternativeName>
    <alternativeName>
        <fullName>Type II inner root sheath-specific keratin-K6irs1</fullName>
    </alternativeName>
    <alternativeName>
        <fullName>Type-II keratin Kb34</fullName>
    </alternativeName>
</protein>
<gene>
    <name type="primary">KRT71</name>
</gene>
<accession>Q148H5</accession>
<evidence type="ECO:0000250" key="1"/>
<evidence type="ECO:0000250" key="2">
    <source>
        <dbReference type="UniProtKB" id="Q3SY84"/>
    </source>
</evidence>
<evidence type="ECO:0000255" key="3">
    <source>
        <dbReference type="PROSITE-ProRule" id="PRU01188"/>
    </source>
</evidence>
<evidence type="ECO:0000256" key="4">
    <source>
        <dbReference type="SAM" id="MobiDB-lite"/>
    </source>
</evidence>
<reference key="1">
    <citation type="submission" date="2006-06" db="EMBL/GenBank/DDBJ databases">
        <authorList>
            <consortium name="NIH - Mammalian Gene Collection (MGC) project"/>
        </authorList>
    </citation>
    <scope>NUCLEOTIDE SEQUENCE [LARGE SCALE MRNA]</scope>
    <source>
        <strain>Hereford</strain>
        <tissue>Fetal skin</tissue>
    </source>
</reference>
<dbReference type="EMBL" id="BC118317">
    <property type="protein sequence ID" value="AAI18318.1"/>
    <property type="molecule type" value="mRNA"/>
</dbReference>
<dbReference type="RefSeq" id="NP_001069438.1">
    <property type="nucleotide sequence ID" value="NM_001075970.1"/>
</dbReference>
<dbReference type="SMR" id="Q148H5"/>
<dbReference type="FunCoup" id="Q148H5">
    <property type="interactions" value="52"/>
</dbReference>
<dbReference type="IntAct" id="Q148H5">
    <property type="interactions" value="1"/>
</dbReference>
<dbReference type="PaxDb" id="9913-ENSBTAP00000015264"/>
<dbReference type="Ensembl" id="ENSBTAT00000015264.5">
    <property type="protein sequence ID" value="ENSBTAP00000015264.5"/>
    <property type="gene ID" value="ENSBTAG00000056824.1"/>
</dbReference>
<dbReference type="GeneID" id="532644"/>
<dbReference type="KEGG" id="bta:532644"/>
<dbReference type="CTD" id="112802"/>
<dbReference type="eggNOG" id="ENOG502SK67">
    <property type="taxonomic scope" value="Eukaryota"/>
</dbReference>
<dbReference type="GeneTree" id="ENSGT00940000162089"/>
<dbReference type="HOGENOM" id="CLU_012560_6_1_1"/>
<dbReference type="InParanoid" id="Q148H5"/>
<dbReference type="OrthoDB" id="2441647at2759"/>
<dbReference type="TreeFam" id="TF317854"/>
<dbReference type="Proteomes" id="UP000009136">
    <property type="component" value="Chromosome 5"/>
</dbReference>
<dbReference type="GO" id="GO:0005737">
    <property type="term" value="C:cytoplasm"/>
    <property type="evidence" value="ECO:0007669"/>
    <property type="project" value="UniProtKB-KW"/>
</dbReference>
<dbReference type="GO" id="GO:0045095">
    <property type="term" value="C:keratin filament"/>
    <property type="evidence" value="ECO:0000250"/>
    <property type="project" value="UniProtKB"/>
</dbReference>
<dbReference type="GO" id="GO:0030280">
    <property type="term" value="F:structural constituent of skin epidermis"/>
    <property type="evidence" value="ECO:0000318"/>
    <property type="project" value="GO_Central"/>
</dbReference>
<dbReference type="GO" id="GO:0031069">
    <property type="term" value="P:hair follicle morphogenesis"/>
    <property type="evidence" value="ECO:0000250"/>
    <property type="project" value="UniProtKB"/>
</dbReference>
<dbReference type="GO" id="GO:0045109">
    <property type="term" value="P:intermediate filament organization"/>
    <property type="evidence" value="ECO:0000250"/>
    <property type="project" value="UniProtKB"/>
</dbReference>
<dbReference type="GO" id="GO:0031424">
    <property type="term" value="P:keratinization"/>
    <property type="evidence" value="ECO:0000318"/>
    <property type="project" value="GO_Central"/>
</dbReference>
<dbReference type="FunFam" id="1.20.5.1160:FF:000001">
    <property type="entry name" value="Keratin type II"/>
    <property type="match status" value="1"/>
</dbReference>
<dbReference type="FunFam" id="1.20.5.170:FF:000004">
    <property type="entry name" value="Keratin, type II cytoskeletal 5"/>
    <property type="match status" value="1"/>
</dbReference>
<dbReference type="FunFam" id="1.20.5.500:FF:000001">
    <property type="entry name" value="Type II keratin 23"/>
    <property type="match status" value="1"/>
</dbReference>
<dbReference type="Gene3D" id="1.20.5.170">
    <property type="match status" value="1"/>
</dbReference>
<dbReference type="Gene3D" id="1.20.5.500">
    <property type="entry name" value="Single helix bin"/>
    <property type="match status" value="1"/>
</dbReference>
<dbReference type="Gene3D" id="1.20.5.1160">
    <property type="entry name" value="Vasodilator-stimulated phosphoprotein"/>
    <property type="match status" value="1"/>
</dbReference>
<dbReference type="InterPro" id="IPR018039">
    <property type="entry name" value="IF_conserved"/>
</dbReference>
<dbReference type="InterPro" id="IPR039008">
    <property type="entry name" value="IF_rod_dom"/>
</dbReference>
<dbReference type="InterPro" id="IPR032444">
    <property type="entry name" value="Keratin_2_head"/>
</dbReference>
<dbReference type="InterPro" id="IPR003054">
    <property type="entry name" value="Keratin_II"/>
</dbReference>
<dbReference type="PANTHER" id="PTHR45616">
    <property type="entry name" value="GATA-TYPE DOMAIN-CONTAINING PROTEIN"/>
    <property type="match status" value="1"/>
</dbReference>
<dbReference type="PANTHER" id="PTHR45616:SF16">
    <property type="entry name" value="KERATIN, TYPE II CYTOSKELETAL 71"/>
    <property type="match status" value="1"/>
</dbReference>
<dbReference type="Pfam" id="PF00038">
    <property type="entry name" value="Filament"/>
    <property type="match status" value="1"/>
</dbReference>
<dbReference type="Pfam" id="PF16208">
    <property type="entry name" value="Keratin_2_head"/>
    <property type="match status" value="2"/>
</dbReference>
<dbReference type="PRINTS" id="PR01276">
    <property type="entry name" value="TYPE2KERATIN"/>
</dbReference>
<dbReference type="SMART" id="SM01391">
    <property type="entry name" value="Filament"/>
    <property type="match status" value="1"/>
</dbReference>
<dbReference type="SUPFAM" id="SSF64593">
    <property type="entry name" value="Intermediate filament protein, coiled coil region"/>
    <property type="match status" value="3"/>
</dbReference>
<dbReference type="PROSITE" id="PS00226">
    <property type="entry name" value="IF_ROD_1"/>
    <property type="match status" value="1"/>
</dbReference>
<dbReference type="PROSITE" id="PS51842">
    <property type="entry name" value="IF_ROD_2"/>
    <property type="match status" value="1"/>
</dbReference>
<sequence length="525" mass="57408">MSRQFTCKSGAAAKGGFSGCSAVLSGGSTSSYRAGGKGLSGGFGSRSLYNLGGVRSISFNVASGSGKSGGYGFGRGRASGFAGSMFGSVALGPMCPTVCPPGGIHQVTVNESLLAPLNVELDPEIQKVRAQEREQIKALNNKFASFIDKVRFLEQQNQVLETKWELLQQLDLNNCKNNLEPILEGYISNLRKQLETLSGDRVRLDSELRSVRDVVEDYKKRYEEEINRRTAAENEFVLLKKDVDAAYANKVELQAKVDSMDQEIKFFKCLYEAEIAQIQSHISDMSVILSMDNNRDLNLDSIIDEVRAQYEDIALKSKAEAEALYQTKFQELQLAAGRHGDDLKNTKNEISELTRLIQRIRSEIENVKKQASNLETAIADAEQRGDNALKDARAKLDELEAALHQSKEELARMMREYQELMSLKLALDMEIATYRKLLESEECRMSGEFPSPVSISIISSTSGSGGYGFRPSSVSGGYVANSGSCISGVCSVRGGESRSRSSTTDYKDALGKGSSLSAPSKKASR</sequence>
<comment type="function">
    <text evidence="2">Plays a central role in hair formation. Essential component of keratin intermediate filaments in the inner root sheath (IRS) of the hair follicle.</text>
</comment>
<comment type="subunit">
    <text evidence="1">Heterodimer of a type I and a type II keratin. Associates with KRT16 and/or KRT17 (By similarity).</text>
</comment>
<comment type="subcellular location">
    <subcellularLocation>
        <location evidence="2">Cytoplasm</location>
        <location evidence="2">Cytoskeleton</location>
    </subcellularLocation>
</comment>
<comment type="miscellaneous">
    <text>There are two types of cytoskeletal and microfibrillar keratin, I (acidic) and II (neutral to basic) (40-55 and 56-70 kDa, respectively).</text>
</comment>
<comment type="similarity">
    <text evidence="3">Belongs to the intermediate filament family.</text>
</comment>
<keyword id="KW-0175">Coiled coil</keyword>
<keyword id="KW-0963">Cytoplasm</keyword>
<keyword id="KW-0206">Cytoskeleton</keyword>
<keyword id="KW-0403">Intermediate filament</keyword>
<keyword id="KW-0416">Keratin</keyword>
<keyword id="KW-1185">Reference proteome</keyword>
<proteinExistence type="evidence at transcript level"/>